<sequence length="124" mass="12542">MAIAKEDILAAVEGMTVLELNELVKAFEEKFGVSAAAVAVAGPAGGGAAAAAEEQTEFTVMLLEAGGNKVAVIKAVRELTGLGLKEAKDLVDGAPKPVKEAVPKAAADEAKKKLEDAGAKAEIK</sequence>
<name>RL7_BURL3</name>
<comment type="function">
    <text evidence="1">Forms part of the ribosomal stalk which helps the ribosome interact with GTP-bound translation factors. Is thus essential for accurate translation.</text>
</comment>
<comment type="subunit">
    <text evidence="1">Homodimer. Part of the ribosomal stalk of the 50S ribosomal subunit. Forms a multimeric L10(L12)X complex, where L10 forms an elongated spine to which 2 to 4 L12 dimers bind in a sequential fashion. Binds GTP-bound translation factors.</text>
</comment>
<comment type="similarity">
    <text evidence="1">Belongs to the bacterial ribosomal protein bL12 family.</text>
</comment>
<keyword id="KW-0687">Ribonucleoprotein</keyword>
<keyword id="KW-0689">Ribosomal protein</keyword>
<evidence type="ECO:0000255" key="1">
    <source>
        <dbReference type="HAMAP-Rule" id="MF_00368"/>
    </source>
</evidence>
<evidence type="ECO:0000305" key="2"/>
<feature type="chain" id="PRO_0000243403" description="Large ribosomal subunit protein bL12">
    <location>
        <begin position="1"/>
        <end position="124"/>
    </location>
</feature>
<dbReference type="EMBL" id="CP000151">
    <property type="protein sequence ID" value="ABB07040.1"/>
    <property type="molecule type" value="Genomic_DNA"/>
</dbReference>
<dbReference type="RefSeq" id="WP_011350669.1">
    <property type="nucleotide sequence ID" value="NZ_CP024943.1"/>
</dbReference>
<dbReference type="SMR" id="Q39KH6"/>
<dbReference type="GeneID" id="45093355"/>
<dbReference type="KEGG" id="bur:Bcep18194_A3438"/>
<dbReference type="PATRIC" id="fig|482957.22.peg.278"/>
<dbReference type="HOGENOM" id="CLU_086499_3_2_4"/>
<dbReference type="Proteomes" id="UP000002705">
    <property type="component" value="Chromosome 1"/>
</dbReference>
<dbReference type="GO" id="GO:0022625">
    <property type="term" value="C:cytosolic large ribosomal subunit"/>
    <property type="evidence" value="ECO:0007669"/>
    <property type="project" value="TreeGrafter"/>
</dbReference>
<dbReference type="GO" id="GO:0003729">
    <property type="term" value="F:mRNA binding"/>
    <property type="evidence" value="ECO:0007669"/>
    <property type="project" value="TreeGrafter"/>
</dbReference>
<dbReference type="GO" id="GO:0003735">
    <property type="term" value="F:structural constituent of ribosome"/>
    <property type="evidence" value="ECO:0007669"/>
    <property type="project" value="InterPro"/>
</dbReference>
<dbReference type="GO" id="GO:0006412">
    <property type="term" value="P:translation"/>
    <property type="evidence" value="ECO:0007669"/>
    <property type="project" value="UniProtKB-UniRule"/>
</dbReference>
<dbReference type="CDD" id="cd00387">
    <property type="entry name" value="Ribosomal_L7_L12"/>
    <property type="match status" value="1"/>
</dbReference>
<dbReference type="FunFam" id="3.30.1390.10:FF:000001">
    <property type="entry name" value="50S ribosomal protein L7/L12"/>
    <property type="match status" value="1"/>
</dbReference>
<dbReference type="Gene3D" id="3.30.1390.10">
    <property type="match status" value="1"/>
</dbReference>
<dbReference type="Gene3D" id="1.20.5.710">
    <property type="entry name" value="Single helix bin"/>
    <property type="match status" value="1"/>
</dbReference>
<dbReference type="HAMAP" id="MF_00368">
    <property type="entry name" value="Ribosomal_bL12"/>
    <property type="match status" value="1"/>
</dbReference>
<dbReference type="InterPro" id="IPR000206">
    <property type="entry name" value="Ribosomal_bL12"/>
</dbReference>
<dbReference type="InterPro" id="IPR013823">
    <property type="entry name" value="Ribosomal_bL12_C"/>
</dbReference>
<dbReference type="InterPro" id="IPR014719">
    <property type="entry name" value="Ribosomal_bL12_C/ClpS-like"/>
</dbReference>
<dbReference type="InterPro" id="IPR008932">
    <property type="entry name" value="Ribosomal_bL12_oligo"/>
</dbReference>
<dbReference type="InterPro" id="IPR036235">
    <property type="entry name" value="Ribosomal_bL12_oligo_N_sf"/>
</dbReference>
<dbReference type="NCBIfam" id="TIGR00855">
    <property type="entry name" value="L12"/>
    <property type="match status" value="1"/>
</dbReference>
<dbReference type="PANTHER" id="PTHR45987">
    <property type="entry name" value="39S RIBOSOMAL PROTEIN L12"/>
    <property type="match status" value="1"/>
</dbReference>
<dbReference type="PANTHER" id="PTHR45987:SF4">
    <property type="entry name" value="LARGE RIBOSOMAL SUBUNIT PROTEIN BL12M"/>
    <property type="match status" value="1"/>
</dbReference>
<dbReference type="Pfam" id="PF00542">
    <property type="entry name" value="Ribosomal_L12"/>
    <property type="match status" value="1"/>
</dbReference>
<dbReference type="Pfam" id="PF16320">
    <property type="entry name" value="Ribosomal_L12_N"/>
    <property type="match status" value="1"/>
</dbReference>
<dbReference type="SUPFAM" id="SSF54736">
    <property type="entry name" value="ClpS-like"/>
    <property type="match status" value="1"/>
</dbReference>
<dbReference type="SUPFAM" id="SSF48300">
    <property type="entry name" value="Ribosomal protein L7/12, oligomerisation (N-terminal) domain"/>
    <property type="match status" value="1"/>
</dbReference>
<reference key="1">
    <citation type="submission" date="2005-10" db="EMBL/GenBank/DDBJ databases">
        <title>Complete sequence of chromosome 1 of Burkholderia sp. 383.</title>
        <authorList>
            <consortium name="US DOE Joint Genome Institute"/>
            <person name="Copeland A."/>
            <person name="Lucas S."/>
            <person name="Lapidus A."/>
            <person name="Barry K."/>
            <person name="Detter J.C."/>
            <person name="Glavina T."/>
            <person name="Hammon N."/>
            <person name="Israni S."/>
            <person name="Pitluck S."/>
            <person name="Chain P."/>
            <person name="Malfatti S."/>
            <person name="Shin M."/>
            <person name="Vergez L."/>
            <person name="Schmutz J."/>
            <person name="Larimer F."/>
            <person name="Land M."/>
            <person name="Kyrpides N."/>
            <person name="Lykidis A."/>
            <person name="Richardson P."/>
        </authorList>
    </citation>
    <scope>NUCLEOTIDE SEQUENCE [LARGE SCALE GENOMIC DNA]</scope>
    <source>
        <strain>ATCC 17760 / DSM 23089 / LMG 22485 / NCIMB 9086 / R18194 / 383</strain>
    </source>
</reference>
<protein>
    <recommendedName>
        <fullName evidence="1">Large ribosomal subunit protein bL12</fullName>
    </recommendedName>
    <alternativeName>
        <fullName evidence="2">50S ribosomal protein L7/L12</fullName>
    </alternativeName>
</protein>
<organism>
    <name type="scientific">Burkholderia lata (strain ATCC 17760 / DSM 23089 / LMG 22485 / NCIMB 9086 / R18194 / 383)</name>
    <dbReference type="NCBI Taxonomy" id="482957"/>
    <lineage>
        <taxon>Bacteria</taxon>
        <taxon>Pseudomonadati</taxon>
        <taxon>Pseudomonadota</taxon>
        <taxon>Betaproteobacteria</taxon>
        <taxon>Burkholderiales</taxon>
        <taxon>Burkholderiaceae</taxon>
        <taxon>Burkholderia</taxon>
        <taxon>Burkholderia cepacia complex</taxon>
    </lineage>
</organism>
<gene>
    <name evidence="1" type="primary">rplL</name>
    <name type="ordered locus">Bcep18194_A3438</name>
</gene>
<proteinExistence type="inferred from homology"/>
<accession>Q39KH6</accession>